<organism>
    <name type="scientific">Physcomitrium patens</name>
    <name type="common">Spreading-leaved earth moss</name>
    <name type="synonym">Physcomitrella patens</name>
    <dbReference type="NCBI Taxonomy" id="3218"/>
    <lineage>
        <taxon>Eukaryota</taxon>
        <taxon>Viridiplantae</taxon>
        <taxon>Streptophyta</taxon>
        <taxon>Embryophyta</taxon>
        <taxon>Bryophyta</taxon>
        <taxon>Bryophytina</taxon>
        <taxon>Bryopsida</taxon>
        <taxon>Funariidae</taxon>
        <taxon>Funariales</taxon>
        <taxon>Funariaceae</taxon>
        <taxon>Physcomitrium</taxon>
    </lineage>
</organism>
<dbReference type="EC" id="2.4.2.60" evidence="1"/>
<dbReference type="EMBL" id="DS544983">
    <property type="protein sequence ID" value="EDQ67630.1"/>
    <property type="molecule type" value="Genomic_DNA"/>
</dbReference>
<dbReference type="RefSeq" id="XP_001767495.1">
    <property type="nucleotide sequence ID" value="XM_001767443.1"/>
</dbReference>
<dbReference type="SMR" id="A9SMC8"/>
<dbReference type="FunCoup" id="A9SMC8">
    <property type="interactions" value="1183"/>
</dbReference>
<dbReference type="eggNOG" id="KOG2960">
    <property type="taxonomic scope" value="Eukaryota"/>
</dbReference>
<dbReference type="HOGENOM" id="CLU_053727_1_0_1"/>
<dbReference type="InParanoid" id="A9SMC8"/>
<dbReference type="Proteomes" id="UP000006727">
    <property type="component" value="Chromosome 20"/>
</dbReference>
<dbReference type="GO" id="GO:0009570">
    <property type="term" value="C:chloroplast stroma"/>
    <property type="evidence" value="ECO:0007669"/>
    <property type="project" value="UniProtKB-UniRule"/>
</dbReference>
<dbReference type="GO" id="GO:0005829">
    <property type="term" value="C:cytosol"/>
    <property type="evidence" value="ECO:0007669"/>
    <property type="project" value="UniProtKB-UniRule"/>
</dbReference>
<dbReference type="GO" id="GO:0160205">
    <property type="term" value="F:cysteine-dependent adenosine diphosphate thiazole synthase activity"/>
    <property type="evidence" value="ECO:0007669"/>
    <property type="project" value="UniProtKB-EC"/>
</dbReference>
<dbReference type="GO" id="GO:0005506">
    <property type="term" value="F:iron ion binding"/>
    <property type="evidence" value="ECO:0007669"/>
    <property type="project" value="UniProtKB-UniRule"/>
</dbReference>
<dbReference type="GO" id="GO:0009228">
    <property type="term" value="P:thiamine biosynthetic process"/>
    <property type="evidence" value="ECO:0007669"/>
    <property type="project" value="UniProtKB-UniRule"/>
</dbReference>
<dbReference type="GO" id="GO:0052837">
    <property type="term" value="P:thiazole biosynthetic process"/>
    <property type="evidence" value="ECO:0007669"/>
    <property type="project" value="UniProtKB-UniRule"/>
</dbReference>
<dbReference type="FunFam" id="3.50.50.60:FF:000070">
    <property type="entry name" value="Thiamine thiazole synthase, chloroplastic"/>
    <property type="match status" value="1"/>
</dbReference>
<dbReference type="Gene3D" id="6.10.250.2840">
    <property type="match status" value="1"/>
</dbReference>
<dbReference type="Gene3D" id="3.50.50.60">
    <property type="entry name" value="FAD/NAD(P)-binding domain"/>
    <property type="match status" value="1"/>
</dbReference>
<dbReference type="HAMAP" id="MF_03158">
    <property type="entry name" value="THI4"/>
    <property type="match status" value="1"/>
</dbReference>
<dbReference type="InterPro" id="IPR036188">
    <property type="entry name" value="FAD/NAD-bd_sf"/>
</dbReference>
<dbReference type="InterPro" id="IPR027495">
    <property type="entry name" value="Sti35"/>
</dbReference>
<dbReference type="InterPro" id="IPR002922">
    <property type="entry name" value="Thi4_fam"/>
</dbReference>
<dbReference type="NCBIfam" id="TIGR00292">
    <property type="entry name" value="sulfide-dependent adenosine diphosphate thiazole synthase"/>
    <property type="match status" value="1"/>
</dbReference>
<dbReference type="PANTHER" id="PTHR43422">
    <property type="entry name" value="THIAMINE THIAZOLE SYNTHASE"/>
    <property type="match status" value="1"/>
</dbReference>
<dbReference type="PANTHER" id="PTHR43422:SF3">
    <property type="entry name" value="THIAMINE THIAZOLE SYNTHASE"/>
    <property type="match status" value="1"/>
</dbReference>
<dbReference type="Pfam" id="PF01946">
    <property type="entry name" value="Thi4"/>
    <property type="match status" value="1"/>
</dbReference>
<dbReference type="SUPFAM" id="SSF51905">
    <property type="entry name" value="FAD/NAD(P)-binding domain"/>
    <property type="match status" value="1"/>
</dbReference>
<name>THI44_PHYPA</name>
<accession>A9SMC8</accession>
<reference key="1">
    <citation type="journal article" date="2008" name="Science">
        <title>The Physcomitrella genome reveals evolutionary insights into the conquest of land by plants.</title>
        <authorList>
            <person name="Rensing S.A."/>
            <person name="Lang D."/>
            <person name="Zimmer A.D."/>
            <person name="Terry A."/>
            <person name="Salamov A."/>
            <person name="Shapiro H."/>
            <person name="Nishiyama T."/>
            <person name="Perroud P.-F."/>
            <person name="Lindquist E.A."/>
            <person name="Kamisugi Y."/>
            <person name="Tanahashi T."/>
            <person name="Sakakibara K."/>
            <person name="Fujita T."/>
            <person name="Oishi K."/>
            <person name="Shin-I T."/>
            <person name="Kuroki Y."/>
            <person name="Toyoda A."/>
            <person name="Suzuki Y."/>
            <person name="Hashimoto S.-I."/>
            <person name="Yamaguchi K."/>
            <person name="Sugano S."/>
            <person name="Kohara Y."/>
            <person name="Fujiyama A."/>
            <person name="Anterola A."/>
            <person name="Aoki S."/>
            <person name="Ashton N."/>
            <person name="Barbazuk W.B."/>
            <person name="Barker E."/>
            <person name="Bennetzen J.L."/>
            <person name="Blankenship R."/>
            <person name="Cho S.H."/>
            <person name="Dutcher S.K."/>
            <person name="Estelle M."/>
            <person name="Fawcett J.A."/>
            <person name="Gundlach H."/>
            <person name="Hanada K."/>
            <person name="Heyl A."/>
            <person name="Hicks K.A."/>
            <person name="Hughes J."/>
            <person name="Lohr M."/>
            <person name="Mayer K."/>
            <person name="Melkozernov A."/>
            <person name="Murata T."/>
            <person name="Nelson D.R."/>
            <person name="Pils B."/>
            <person name="Prigge M."/>
            <person name="Reiss B."/>
            <person name="Renner T."/>
            <person name="Rombauts S."/>
            <person name="Rushton P.J."/>
            <person name="Sanderfoot A."/>
            <person name="Schween G."/>
            <person name="Shiu S.-H."/>
            <person name="Stueber K."/>
            <person name="Theodoulou F.L."/>
            <person name="Tu H."/>
            <person name="Van de Peer Y."/>
            <person name="Verrier P.J."/>
            <person name="Waters E."/>
            <person name="Wood A."/>
            <person name="Yang L."/>
            <person name="Cove D."/>
            <person name="Cuming A.C."/>
            <person name="Hasebe M."/>
            <person name="Lucas S."/>
            <person name="Mishler B.D."/>
            <person name="Reski R."/>
            <person name="Grigoriev I.V."/>
            <person name="Quatrano R.S."/>
            <person name="Boore J.L."/>
        </authorList>
    </citation>
    <scope>NUCLEOTIDE SEQUENCE [LARGE SCALE GENOMIC DNA]</scope>
    <source>
        <strain>cv. Gransden 2004</strain>
    </source>
</reference>
<proteinExistence type="inferred from homology"/>
<gene>
    <name evidence="1" type="primary">THI1-4</name>
    <name type="ORF">PHYPADRAFT_165702</name>
</gene>
<evidence type="ECO:0000255" key="1">
    <source>
        <dbReference type="HAMAP-Rule" id="MF_03158"/>
    </source>
</evidence>
<sequence length="343" mass="36632">MSSQAGNVGSSSSSLAGVRMVVSPKAQLRHARLPAASASMYSDAKYDLNNYKFEPIKESIVAREMTRRYMTEMITHADTDVVVVGAGSAGLSCAYELSKNPNVKVAIIEQSVSPGGGAWLGGQLFSAMVVRKPAHRFLDEIEVPYEELENYVVIKHAALFTSTIMSKLLARPNVKLFNAVAAEDLIIRGDRVSGVVTNWALVAQNHNTQSCMDPNVMEAKVVVSSCGHDGPFGATGVKRLRSIGMIESVPGMKCLDMNAAEDAIVKHTREVVPGMIVTGMEVAEIDGSPRMGPTFGAMMISGQKAAHLALKALGLPNELDGNYKLNVHPELVLASTDDETASA</sequence>
<comment type="function">
    <text evidence="1">Involved in biosynthesis of the thiamine precursor thiazole. Catalyzes the conversion of NAD and glycine to adenosine diphosphate 5-(2-hydroxyethyl)-4-methylthiazole-2-carboxylic acid (ADT), an adenylated thiazole intermediate. The reaction includes an iron-dependent sulfide transfer from a conserved cysteine residue of the protein to a thiazole intermediate. The enzyme can only undergo a single turnover, which suggests it is a suicide enzyme. May have additional roles in adaptation to various stress conditions and in DNA damage tolerance.</text>
</comment>
<comment type="catalytic activity">
    <reaction evidence="1">
        <text>[ADP-thiazole synthase]-L-cysteine + glycine + NAD(+) = [ADP-thiazole synthase]-dehydroalanine + ADP-5-ethyl-4-methylthiazole-2-carboxylate + nicotinamide + 3 H2O + 2 H(+)</text>
        <dbReference type="Rhea" id="RHEA:55708"/>
        <dbReference type="Rhea" id="RHEA-COMP:14264"/>
        <dbReference type="Rhea" id="RHEA-COMP:14265"/>
        <dbReference type="ChEBI" id="CHEBI:15377"/>
        <dbReference type="ChEBI" id="CHEBI:15378"/>
        <dbReference type="ChEBI" id="CHEBI:17154"/>
        <dbReference type="ChEBI" id="CHEBI:29950"/>
        <dbReference type="ChEBI" id="CHEBI:57305"/>
        <dbReference type="ChEBI" id="CHEBI:57540"/>
        <dbReference type="ChEBI" id="CHEBI:90873"/>
        <dbReference type="ChEBI" id="CHEBI:139151"/>
        <dbReference type="EC" id="2.4.2.60"/>
    </reaction>
</comment>
<comment type="cofactor">
    <cofactor evidence="1">
        <name>Fe cation</name>
        <dbReference type="ChEBI" id="CHEBI:24875"/>
    </cofactor>
    <text evidence="1">Binds 1 Fe cation per subunit.</text>
</comment>
<comment type="subunit">
    <text evidence="1">Homooctamer.</text>
</comment>
<comment type="subcellular location">
    <subcellularLocation>
        <location evidence="1">Plastid</location>
        <location evidence="1">Chloroplast</location>
    </subcellularLocation>
</comment>
<comment type="PTM">
    <text evidence="1">During the catalytic reaction, a sulfide is transferred from Cys-211 to a reaction intermediate, generating a dehydroalanine residue.</text>
</comment>
<comment type="miscellaneous">
    <text evidence="1">This protein may be expected to contain an N-terminal transit peptide but none has been predicted.</text>
</comment>
<comment type="similarity">
    <text evidence="1">Belongs to the THI4 family.</text>
</comment>
<protein>
    <recommendedName>
        <fullName evidence="1">Thiamine thiazole synthase 4, chloroplastic</fullName>
        <ecNumber evidence="1">2.4.2.60</ecNumber>
    </recommendedName>
    <alternativeName>
        <fullName evidence="1">Thiazole biosynthetic enzyme 4</fullName>
    </alternativeName>
</protein>
<feature type="chain" id="PRO_0000415864" description="Thiamine thiazole synthase 4, chloroplastic">
    <location>
        <begin position="1"/>
        <end position="343"/>
    </location>
</feature>
<feature type="binding site" evidence="1">
    <location>
        <position position="89"/>
    </location>
    <ligand>
        <name>substrate</name>
    </ligand>
</feature>
<feature type="binding site" evidence="1">
    <location>
        <begin position="109"/>
        <end position="110"/>
    </location>
    <ligand>
        <name>substrate</name>
    </ligand>
</feature>
<feature type="binding site" evidence="1">
    <location>
        <position position="117"/>
    </location>
    <ligand>
        <name>substrate</name>
    </ligand>
</feature>
<feature type="binding site" evidence="1">
    <location>
        <position position="182"/>
    </location>
    <ligand>
        <name>substrate</name>
    </ligand>
</feature>
<feature type="binding site" evidence="1">
    <location>
        <position position="213"/>
    </location>
    <ligand>
        <name>substrate</name>
    </ligand>
</feature>
<feature type="binding site" evidence="1">
    <location>
        <position position="228"/>
    </location>
    <ligand>
        <name>substrate</name>
    </ligand>
</feature>
<feature type="binding site" evidence="1">
    <location>
        <position position="280"/>
    </location>
    <ligand>
        <name>substrate</name>
    </ligand>
</feature>
<feature type="binding site" evidence="1">
    <location>
        <begin position="290"/>
        <end position="292"/>
    </location>
    <ligand>
        <name>substrate</name>
    </ligand>
</feature>
<feature type="modified residue" description="2,3-didehydroalanine (Cys)" evidence="1">
    <location>
        <position position="211"/>
    </location>
</feature>
<keyword id="KW-0150">Chloroplast</keyword>
<keyword id="KW-0408">Iron</keyword>
<keyword id="KW-0479">Metal-binding</keyword>
<keyword id="KW-0520">NAD</keyword>
<keyword id="KW-0934">Plastid</keyword>
<keyword id="KW-1185">Reference proteome</keyword>
<keyword id="KW-0784">Thiamine biosynthesis</keyword>
<keyword id="KW-0808">Transferase</keyword>